<feature type="signal peptide" evidence="3">
    <location>
        <begin position="1"/>
        <end position="23"/>
    </location>
</feature>
<feature type="chain" id="PRO_0000236272" description="Fibulin-5">
    <location>
        <begin position="24"/>
        <end position="448"/>
    </location>
</feature>
<feature type="domain" description="EGF-like 1; calcium-binding" evidence="4">
    <location>
        <begin position="42"/>
        <end position="82"/>
    </location>
</feature>
<feature type="domain" description="EGF-like 2; calcium-binding" evidence="4">
    <location>
        <begin position="127"/>
        <end position="167"/>
    </location>
</feature>
<feature type="domain" description="EGF-like 3; calcium-binding" evidence="4">
    <location>
        <begin position="168"/>
        <end position="206"/>
    </location>
</feature>
<feature type="domain" description="EGF-like 4; calcium-binding" evidence="4">
    <location>
        <begin position="207"/>
        <end position="246"/>
    </location>
</feature>
<feature type="domain" description="EGF-like 5; calcium-binding" evidence="4">
    <location>
        <begin position="247"/>
        <end position="287"/>
    </location>
</feature>
<feature type="domain" description="EGF-like 6; calcium-binding" evidence="4">
    <location>
        <begin position="288"/>
        <end position="333"/>
    </location>
</feature>
<feature type="region of interest" description="Interaction with LOXL1" evidence="2">
    <location>
        <begin position="245"/>
        <end position="448"/>
    </location>
</feature>
<feature type="short sequence motif" description="Cell attachment site" evidence="3">
    <location>
        <begin position="54"/>
        <end position="56"/>
    </location>
</feature>
<feature type="glycosylation site" description="N-linked (GlcNAc...) asparagine" evidence="3">
    <location>
        <position position="283"/>
    </location>
</feature>
<feature type="glycosylation site" description="N-linked (GlcNAc...) asparagine" evidence="3">
    <location>
        <position position="296"/>
    </location>
</feature>
<feature type="disulfide bond" evidence="4">
    <location>
        <begin position="46"/>
        <end position="59"/>
    </location>
</feature>
<feature type="disulfide bond" evidence="4">
    <location>
        <begin position="53"/>
        <end position="68"/>
    </location>
</feature>
<feature type="disulfide bond" evidence="4">
    <location>
        <begin position="131"/>
        <end position="144"/>
    </location>
</feature>
<feature type="disulfide bond" evidence="4">
    <location>
        <begin position="138"/>
        <end position="153"/>
    </location>
</feature>
<feature type="disulfide bond" evidence="4">
    <location>
        <begin position="155"/>
        <end position="166"/>
    </location>
</feature>
<feature type="disulfide bond" evidence="4">
    <location>
        <begin position="172"/>
        <end position="181"/>
    </location>
</feature>
<feature type="disulfide bond" evidence="4">
    <location>
        <begin position="177"/>
        <end position="190"/>
    </location>
</feature>
<feature type="disulfide bond" evidence="4">
    <location>
        <begin position="192"/>
        <end position="205"/>
    </location>
</feature>
<feature type="disulfide bond" evidence="4">
    <location>
        <begin position="211"/>
        <end position="221"/>
    </location>
</feature>
<feature type="disulfide bond" evidence="4">
    <location>
        <begin position="217"/>
        <end position="230"/>
    </location>
</feature>
<feature type="disulfide bond" evidence="4">
    <location>
        <begin position="232"/>
        <end position="245"/>
    </location>
</feature>
<feature type="disulfide bond" evidence="4">
    <location>
        <begin position="251"/>
        <end position="262"/>
    </location>
</feature>
<feature type="disulfide bond" evidence="4">
    <location>
        <begin position="258"/>
        <end position="271"/>
    </location>
</feature>
<feature type="disulfide bond" evidence="4">
    <location>
        <begin position="273"/>
        <end position="286"/>
    </location>
</feature>
<feature type="disulfide bond" evidence="4">
    <location>
        <begin position="292"/>
        <end position="305"/>
    </location>
</feature>
<feature type="disulfide bond" evidence="4">
    <location>
        <begin position="299"/>
        <end position="314"/>
    </location>
</feature>
<feature type="disulfide bond" evidence="4">
    <location>
        <begin position="320"/>
        <end position="332"/>
    </location>
</feature>
<evidence type="ECO:0000250" key="1">
    <source>
        <dbReference type="UniProtKB" id="Q9UBX5"/>
    </source>
</evidence>
<evidence type="ECO:0000250" key="2">
    <source>
        <dbReference type="UniProtKB" id="Q9WVH9"/>
    </source>
</evidence>
<evidence type="ECO:0000255" key="3"/>
<evidence type="ECO:0000255" key="4">
    <source>
        <dbReference type="PROSITE-ProRule" id="PRU00076"/>
    </source>
</evidence>
<evidence type="ECO:0000305" key="5"/>
<reference key="1">
    <citation type="journal article" date="2005" name="BMC Genomics">
        <title>Characterization of 954 bovine full-CDS cDNA sequences.</title>
        <authorList>
            <person name="Harhay G.P."/>
            <person name="Sonstegard T.S."/>
            <person name="Keele J.W."/>
            <person name="Heaton M.P."/>
            <person name="Clawson M.L."/>
            <person name="Snelling W.M."/>
            <person name="Wiedmann R.T."/>
            <person name="Van Tassell C.P."/>
            <person name="Smith T.P.L."/>
        </authorList>
    </citation>
    <scope>NUCLEOTIDE SEQUENCE [LARGE SCALE MRNA]</scope>
</reference>
<sequence>MPGFKRILTVTVLALCLPTPGNAQQQCTNGFDLDRSSGQCLDVDECRTIPEACRGDMMCVNQNGGYLCIPRTNPVYRGPYSNPYSNPYSASYPAAAPPLSAPNYPTISRPLICRFGYQMDESNQCVDVDECATDSHQCNPTQICINTEGGYTCSCTDGYWLLEGQCLDIDECRYGYCQQLCANVPGSYSCTCNPGFTLNEDGRSCQDVNECATENPCVQTCVNTYGSFICRCDPGYELEDDGVHCSDMDECSFSEFLCQHECVNQPGTYFCSCPAGYILLDDNRSCQDINECEHRNHTCILQQTCYNLQGGFKCIDPIRCEEPYLRISDNRCMCPAENPGCRDQPFTILYRDMDVVSGRSVPADIFQMQATTRYPGAYYIFQIKSGNDGREFYMRQTGPISATLVMTRPIKGPRDIQLDLEMITVNTVINFRGSSVIRLRIYVSQYPF</sequence>
<protein>
    <recommendedName>
        <fullName>Fibulin-5</fullName>
        <shortName>FIBL-5</shortName>
    </recommendedName>
</protein>
<gene>
    <name type="primary">FBLN5</name>
</gene>
<organism>
    <name type="scientific">Bos taurus</name>
    <name type="common">Bovine</name>
    <dbReference type="NCBI Taxonomy" id="9913"/>
    <lineage>
        <taxon>Eukaryota</taxon>
        <taxon>Metazoa</taxon>
        <taxon>Chordata</taxon>
        <taxon>Craniata</taxon>
        <taxon>Vertebrata</taxon>
        <taxon>Euteleostomi</taxon>
        <taxon>Mammalia</taxon>
        <taxon>Eutheria</taxon>
        <taxon>Laurasiatheria</taxon>
        <taxon>Artiodactyla</taxon>
        <taxon>Ruminantia</taxon>
        <taxon>Pecora</taxon>
        <taxon>Bovidae</taxon>
        <taxon>Bovinae</taxon>
        <taxon>Bos</taxon>
    </lineage>
</organism>
<keyword id="KW-0106">Calcium</keyword>
<keyword id="KW-0130">Cell adhesion</keyword>
<keyword id="KW-1015">Disulfide bond</keyword>
<keyword id="KW-0245">EGF-like domain</keyword>
<keyword id="KW-0272">Extracellular matrix</keyword>
<keyword id="KW-0325">Glycoprotein</keyword>
<keyword id="KW-1185">Reference proteome</keyword>
<keyword id="KW-0677">Repeat</keyword>
<keyword id="KW-0964">Secreted</keyword>
<keyword id="KW-0732">Signal</keyword>
<name>FBLN5_BOVIN</name>
<comment type="function">
    <text evidence="1 2">Essential for elastic fiber formation, is involved in the assembly of continuous elastin (ELN) polymer and promotes the interaction of microfibrils and ELN. Stabilizes and organizes elastic fibers in the skin, lung and vasculature. Promotes adhesion of endothelial cells through interaction of integrins and the RGD motif. Vascular ligand for integrin receptors which may play a role in vascular development and remodeling. May act as an adapter that mediates the interaction between FBN1 and ELN.</text>
</comment>
<comment type="subunit">
    <text evidence="1 2">Homodimer. Monomer, homodimerizes in presence of Ca(2+). Interacts with ELN. Interacts (via N-terminus) with the integrins ITGAV/ITGB3, ITGAV/ITGB5 and ITGA9/ITGB1. Interacts with FBN1 (via N-terminal domain). Forms a ternary complex with ELN and FBN1. Interacts with EFEMP2 with moderate affinity (By similarity). Interacts with LOXL1 (By similarity).</text>
</comment>
<comment type="subcellular location">
    <subcellularLocation>
        <location evidence="1">Secreted</location>
    </subcellularLocation>
    <subcellularLocation>
        <location evidence="1">Secreted</location>
        <location evidence="1">Extracellular space</location>
        <location evidence="1">Extracellular matrix</location>
    </subcellularLocation>
    <text evidence="1">co-localizes with ELN in elastic fibers.</text>
</comment>
<comment type="PTM">
    <text evidence="1">N-glycosylated.</text>
</comment>
<comment type="similarity">
    <text evidence="5">Belongs to the fibulin family.</text>
</comment>
<proteinExistence type="evidence at transcript level"/>
<dbReference type="EMBL" id="BT020707">
    <property type="protein sequence ID" value="AAX08724.1"/>
    <property type="molecule type" value="mRNA"/>
</dbReference>
<dbReference type="RefSeq" id="NP_001014946.1">
    <property type="nucleotide sequence ID" value="NM_001014946.1"/>
</dbReference>
<dbReference type="FunCoup" id="Q5EA62">
    <property type="interactions" value="266"/>
</dbReference>
<dbReference type="IntAct" id="Q5EA62">
    <property type="interactions" value="2"/>
</dbReference>
<dbReference type="STRING" id="9913.ENSBTAP00000063953"/>
<dbReference type="GlyCosmos" id="Q5EA62">
    <property type="glycosylation" value="2 sites, No reported glycans"/>
</dbReference>
<dbReference type="GlyGen" id="Q5EA62">
    <property type="glycosylation" value="2 sites"/>
</dbReference>
<dbReference type="PaxDb" id="9913-ENSBTAP00000024122"/>
<dbReference type="PeptideAtlas" id="Q5EA62"/>
<dbReference type="GeneID" id="535185"/>
<dbReference type="KEGG" id="bta:535185"/>
<dbReference type="CTD" id="10516"/>
<dbReference type="eggNOG" id="KOG1217">
    <property type="taxonomic scope" value="Eukaryota"/>
</dbReference>
<dbReference type="InParanoid" id="Q5EA62"/>
<dbReference type="OrthoDB" id="4062651at2759"/>
<dbReference type="Proteomes" id="UP000009136">
    <property type="component" value="Unplaced"/>
</dbReference>
<dbReference type="GO" id="GO:0062023">
    <property type="term" value="C:collagen-containing extracellular matrix"/>
    <property type="evidence" value="ECO:0000250"/>
    <property type="project" value="UniProtKB"/>
</dbReference>
<dbReference type="GO" id="GO:0005615">
    <property type="term" value="C:extracellular space"/>
    <property type="evidence" value="ECO:0000250"/>
    <property type="project" value="UniProtKB"/>
</dbReference>
<dbReference type="GO" id="GO:0005509">
    <property type="term" value="F:calcium ion binding"/>
    <property type="evidence" value="ECO:0007669"/>
    <property type="project" value="InterPro"/>
</dbReference>
<dbReference type="GO" id="GO:0005178">
    <property type="term" value="F:integrin binding"/>
    <property type="evidence" value="ECO:0000250"/>
    <property type="project" value="UniProtKB"/>
</dbReference>
<dbReference type="GO" id="GO:0042803">
    <property type="term" value="F:protein homodimerization activity"/>
    <property type="evidence" value="ECO:0000250"/>
    <property type="project" value="UniProtKB"/>
</dbReference>
<dbReference type="GO" id="GO:0007155">
    <property type="term" value="P:cell adhesion"/>
    <property type="evidence" value="ECO:0007669"/>
    <property type="project" value="UniProtKB-KW"/>
</dbReference>
<dbReference type="GO" id="GO:0048251">
    <property type="term" value="P:elastic fiber assembly"/>
    <property type="evidence" value="ECO:0000250"/>
    <property type="project" value="UniProtKB"/>
</dbReference>
<dbReference type="CDD" id="cd00054">
    <property type="entry name" value="EGF_CA"/>
    <property type="match status" value="1"/>
</dbReference>
<dbReference type="FunFam" id="2.10.25.10:FF:000367">
    <property type="entry name" value="EGF-containing fibulin-like extracellular matrix protein 2"/>
    <property type="match status" value="1"/>
</dbReference>
<dbReference type="FunFam" id="2.10.25.10:FF:000091">
    <property type="entry name" value="Fibulin 5"/>
    <property type="match status" value="2"/>
</dbReference>
<dbReference type="FunFam" id="2.10.25.10:FF:000487">
    <property type="entry name" value="Fibulin 5"/>
    <property type="match status" value="1"/>
</dbReference>
<dbReference type="FunFam" id="2.10.25.10:FF:000190">
    <property type="entry name" value="fibulin-5 isoform X2"/>
    <property type="match status" value="1"/>
</dbReference>
<dbReference type="Gene3D" id="2.10.25.10">
    <property type="entry name" value="Laminin"/>
    <property type="match status" value="7"/>
</dbReference>
<dbReference type="InterPro" id="IPR026823">
    <property type="entry name" value="cEGF"/>
</dbReference>
<dbReference type="InterPro" id="IPR001881">
    <property type="entry name" value="EGF-like_Ca-bd_dom"/>
</dbReference>
<dbReference type="InterPro" id="IPR000742">
    <property type="entry name" value="EGF-like_dom"/>
</dbReference>
<dbReference type="InterPro" id="IPR000152">
    <property type="entry name" value="EGF-type_Asp/Asn_hydroxyl_site"/>
</dbReference>
<dbReference type="InterPro" id="IPR018097">
    <property type="entry name" value="EGF_Ca-bd_CS"/>
</dbReference>
<dbReference type="InterPro" id="IPR055088">
    <property type="entry name" value="Fibulin_C"/>
</dbReference>
<dbReference type="InterPro" id="IPR009030">
    <property type="entry name" value="Growth_fac_rcpt_cys_sf"/>
</dbReference>
<dbReference type="InterPro" id="IPR052235">
    <property type="entry name" value="Nephronectin_domain"/>
</dbReference>
<dbReference type="InterPro" id="IPR049883">
    <property type="entry name" value="NOTCH1_EGF-like"/>
</dbReference>
<dbReference type="PANTHER" id="PTHR24050">
    <property type="entry name" value="PA14 DOMAIN-CONTAINING PROTEIN"/>
    <property type="match status" value="1"/>
</dbReference>
<dbReference type="PANTHER" id="PTHR24050:SF28">
    <property type="entry name" value="UROMODULIN-LIKE"/>
    <property type="match status" value="1"/>
</dbReference>
<dbReference type="Pfam" id="PF12662">
    <property type="entry name" value="cEGF"/>
    <property type="match status" value="3"/>
</dbReference>
<dbReference type="Pfam" id="PF07645">
    <property type="entry name" value="EGF_CA"/>
    <property type="match status" value="2"/>
</dbReference>
<dbReference type="Pfam" id="PF22914">
    <property type="entry name" value="Fibulin_C"/>
    <property type="match status" value="1"/>
</dbReference>
<dbReference type="SMART" id="SM00181">
    <property type="entry name" value="EGF"/>
    <property type="match status" value="5"/>
</dbReference>
<dbReference type="SMART" id="SM00179">
    <property type="entry name" value="EGF_CA"/>
    <property type="match status" value="6"/>
</dbReference>
<dbReference type="SUPFAM" id="SSF57184">
    <property type="entry name" value="Growth factor receptor domain"/>
    <property type="match status" value="2"/>
</dbReference>
<dbReference type="PROSITE" id="PS00010">
    <property type="entry name" value="ASX_HYDROXYL"/>
    <property type="match status" value="4"/>
</dbReference>
<dbReference type="PROSITE" id="PS01186">
    <property type="entry name" value="EGF_2"/>
    <property type="match status" value="4"/>
</dbReference>
<dbReference type="PROSITE" id="PS50026">
    <property type="entry name" value="EGF_3"/>
    <property type="match status" value="5"/>
</dbReference>
<dbReference type="PROSITE" id="PS01187">
    <property type="entry name" value="EGF_CA"/>
    <property type="match status" value="6"/>
</dbReference>
<accession>Q5EA62</accession>